<comment type="subcellular location">
    <subcellularLocation>
        <location evidence="3">Golgi apparatus membrane</location>
        <topology evidence="3">Multi-pass membrane protein</topology>
    </subcellularLocation>
    <subcellularLocation>
        <location evidence="3">Cell projection</location>
        <location evidence="3">Cilium</location>
    </subcellularLocation>
    <text>In cilia and Golgi complexes.</text>
</comment>
<comment type="similarity">
    <text evidence="4">Belongs to the SPEC3 family.</text>
</comment>
<feature type="chain" id="PRO_0000072108" description="Protein SPEC3">
    <location>
        <begin position="1"/>
        <end position="208"/>
    </location>
</feature>
<feature type="transmembrane region" description="Helical" evidence="1">
    <location>
        <begin position="107"/>
        <end position="127"/>
    </location>
</feature>
<feature type="transmembrane region" description="Helical" evidence="1">
    <location>
        <begin position="163"/>
        <end position="183"/>
    </location>
</feature>
<feature type="region of interest" description="Disordered" evidence="2">
    <location>
        <begin position="1"/>
        <end position="63"/>
    </location>
</feature>
<feature type="compositionally biased region" description="Pro residues" evidence="2">
    <location>
        <begin position="12"/>
        <end position="29"/>
    </location>
</feature>
<feature type="compositionally biased region" description="Low complexity" evidence="2">
    <location>
        <begin position="30"/>
        <end position="40"/>
    </location>
</feature>
<feature type="compositionally biased region" description="Pro residues" evidence="2">
    <location>
        <begin position="41"/>
        <end position="63"/>
    </location>
</feature>
<feature type="glycosylation site" description="N-linked (GlcNAc...) asparagine" evidence="1">
    <location>
        <position position="71"/>
    </location>
</feature>
<keyword id="KW-0966">Cell projection</keyword>
<keyword id="KW-0969">Cilium</keyword>
<keyword id="KW-0325">Glycoprotein</keyword>
<keyword id="KW-0333">Golgi apparatus</keyword>
<keyword id="KW-0472">Membrane</keyword>
<keyword id="KW-1185">Reference proteome</keyword>
<keyword id="KW-0812">Transmembrane</keyword>
<keyword id="KW-1133">Transmembrane helix</keyword>
<organism>
    <name type="scientific">Strongylocentrotus purpuratus</name>
    <name type="common">Purple sea urchin</name>
    <dbReference type="NCBI Taxonomy" id="7668"/>
    <lineage>
        <taxon>Eukaryota</taxon>
        <taxon>Metazoa</taxon>
        <taxon>Echinodermata</taxon>
        <taxon>Eleutherozoa</taxon>
        <taxon>Echinozoa</taxon>
        <taxon>Echinoidea</taxon>
        <taxon>Euechinoidea</taxon>
        <taxon>Echinacea</taxon>
        <taxon>Camarodonta</taxon>
        <taxon>Echinidea</taxon>
        <taxon>Strongylocentrotidae</taxon>
        <taxon>Strongylocentrotus</taxon>
    </lineage>
</organism>
<reference key="1">
    <citation type="journal article" date="1987" name="Genes Dev.">
        <title>Spec3: embryonic expression of a sea urchin gene whose product is involved in ectodermal ciliogenesis.</title>
        <authorList>
            <person name="Eldon E.D."/>
            <person name="Angerer L.M."/>
            <person name="Angerer R.C."/>
            <person name="Klein W.H."/>
        </authorList>
    </citation>
    <scope>NUCLEOTIDE SEQUENCE</scope>
</reference>
<reference key="2">
    <citation type="journal article" date="1990" name="Genes Dev.">
        <title>Localization of the sea urchin Spec3 protein to cilia and Golgi complexes of embryonic ectoderm cells.</title>
        <authorList>
            <person name="Eldon E.D."/>
            <person name="Montpetit I.C."/>
            <person name="Nguyen T."/>
            <person name="Decker G."/>
            <person name="Valdizan M.C."/>
            <person name="Klein W.H."/>
            <person name="Brandhorst B.P."/>
        </authorList>
    </citation>
    <scope>SUBCELLULAR LOCATION</scope>
</reference>
<protein>
    <recommendedName>
        <fullName>Protein SPEC3</fullName>
    </recommendedName>
</protein>
<name>SPC3_STRPU</name>
<sequence length="208" mass="21719">MAQVAPTGAPTDAPPAYPPPPQQAPPPQQPGYGQPQLGYGQPPPQLGYGQPPPQLGYGYPPPPQNNNMMMNNTVVVTAPAPAPANNVVIINQKKDNCCRQAIPAHHIAAAILCLIFNIFFPGIGTIIAGFAVFCCGNPGADGGSKVGTMCINFWIGLLQIGTVWFFFLGWIWSIMWGAAFIGMSADYHSGGDTTIVATGGGGTTVINN</sequence>
<proteinExistence type="inferred from homology"/>
<gene>
    <name type="primary">SPEC3</name>
</gene>
<accession>P16537</accession>
<dbReference type="PIR" id="A43696">
    <property type="entry name" value="A43696"/>
</dbReference>
<dbReference type="GlyCosmos" id="P16537">
    <property type="glycosylation" value="1 site, No reported glycans"/>
</dbReference>
<dbReference type="eggNOG" id="ENOG502S270">
    <property type="taxonomic scope" value="Eukaryota"/>
</dbReference>
<dbReference type="HOGENOM" id="CLU_1322394_0_0_1"/>
<dbReference type="InParanoid" id="P16537"/>
<dbReference type="Proteomes" id="UP000007110">
    <property type="component" value="Unassembled WGS sequence"/>
</dbReference>
<dbReference type="GO" id="GO:0005929">
    <property type="term" value="C:cilium"/>
    <property type="evidence" value="ECO:0007669"/>
    <property type="project" value="UniProtKB-SubCell"/>
</dbReference>
<dbReference type="GO" id="GO:0000139">
    <property type="term" value="C:Golgi membrane"/>
    <property type="evidence" value="ECO:0007669"/>
    <property type="project" value="UniProtKB-SubCell"/>
</dbReference>
<dbReference type="InterPro" id="IPR026673">
    <property type="entry name" value="SPEC3/Stum"/>
</dbReference>
<dbReference type="PANTHER" id="PTHR21676">
    <property type="entry name" value="PROTEIN STUM"/>
    <property type="match status" value="1"/>
</dbReference>
<dbReference type="PANTHER" id="PTHR21676:SF6">
    <property type="entry name" value="PROTEIN STUM"/>
    <property type="match status" value="1"/>
</dbReference>
<dbReference type="Pfam" id="PF15795">
    <property type="entry name" value="Spec3"/>
    <property type="match status" value="1"/>
</dbReference>
<evidence type="ECO:0000255" key="1"/>
<evidence type="ECO:0000256" key="2">
    <source>
        <dbReference type="SAM" id="MobiDB-lite"/>
    </source>
</evidence>
<evidence type="ECO:0000269" key="3">
    <source>
    </source>
</evidence>
<evidence type="ECO:0000305" key="4"/>